<protein>
    <recommendedName>
        <fullName>Ephrin-B2a</fullName>
    </recommendedName>
</protein>
<sequence>MGDSLWRYYFGVLVIACKVNLSRALILDSIYWNTTNTKFVPGQGLVLYPQIGDKMDIVCPRVEGGSMEGVEYYKLYMVPLEQLKSCQVTKADTPLLNCVKPDQDVKFTLKFQEFSPNLWGLEFFRGKDYYIISTSNGTMEGLDNQEGGVCKTKSMKIIMKVGQNPSDPISPKDYPTSYPPKHPDLGGKDSKSNEVLKPDASPHGEDKGDGNKSSSVIGSEVALFACIASASVIVIIIIIMLVFLLLKYRRRHRKHSPQHATTLSLSTLATPKRGGSGGNNNGSEPSDIIIPLRTADSVFCPHYEKVSGDYGHPVYIVQEMPPQSPANIYYKV</sequence>
<evidence type="ECO:0000250" key="1"/>
<evidence type="ECO:0000250" key="2">
    <source>
        <dbReference type="UniProtKB" id="P52799"/>
    </source>
</evidence>
<evidence type="ECO:0000255" key="3"/>
<evidence type="ECO:0000255" key="4">
    <source>
        <dbReference type="PROSITE-ProRule" id="PRU00884"/>
    </source>
</evidence>
<evidence type="ECO:0000256" key="5">
    <source>
        <dbReference type="SAM" id="MobiDB-lite"/>
    </source>
</evidence>
<gene>
    <name type="primary">efnb2a</name>
    <name type="synonym">efnb2</name>
</gene>
<proteinExistence type="evidence at protein level"/>
<accession>O73874</accession>
<comment type="function">
    <text evidence="1">Cell surface transmembrane ligand for Eph receptors, a family of receptor tyrosine kinases which are crucial for migration, repulsion and adhesion during neuronal, vascular and epithelial development. Binds promiscuously Eph receptors residing on adjacent cells, leading to contact-dependent bidirectional signaling into neighboring cells. The signaling pathway downstream of the receptor is referred to as forward signaling while the signaling pathway downstream of the ephrin ligand is referred to as reverse signaling. Together with ephb4 may play a central role in heart morphogenesis and angiogenesis through regulation of cell adhesion and cell migration (By similarity).</text>
</comment>
<comment type="subunit">
    <text>Binds to the receptor tyrosine kinase ephb4.</text>
</comment>
<comment type="interaction">
    <interactant intactId="EBI-42473274">
        <id>O73874</id>
    </interactant>
    <interactant intactId="EBI-42473062">
        <id>O13146</id>
        <label>epha3</label>
    </interactant>
    <organismsDiffer>false</organismsDiffer>
    <experiments>2</experiments>
</comment>
<comment type="interaction">
    <interactant intactId="EBI-42473274">
        <id>O73874</id>
    </interactant>
    <interactant intactId="EBI-42473157">
        <id>Q5ZEW1</id>
        <label>epha4a</label>
    </interactant>
    <organismsDiffer>false</organismsDiffer>
    <experiments>2</experiments>
</comment>
<comment type="interaction">
    <interactant intactId="EBI-42473274">
        <id>O73874</id>
    </interactant>
    <interactant intactId="EBI-42473126">
        <id>A0A8M9PHF0</id>
        <label>epha7</label>
    </interactant>
    <organismsDiffer>false</organismsDiffer>
    <experiments>2</experiments>
</comment>
<comment type="interaction">
    <interactant intactId="EBI-42473274">
        <id>O73874</id>
    </interactant>
    <interactant intactId="EBI-42477299">
        <id>O73875</id>
        <label>ephb4a</label>
    </interactant>
    <organismsDiffer>false</organismsDiffer>
    <experiments>2</experiments>
</comment>
<comment type="interaction">
    <interactant intactId="EBI-42473274">
        <id>O73874</id>
    </interactant>
    <interactant intactId="EBI-42473330">
        <id>O73878</id>
        <label>ephb4b</label>
    </interactant>
    <organismsDiffer>false</organismsDiffer>
    <experiments>2</experiments>
</comment>
<comment type="subcellular location">
    <subcellularLocation>
        <location evidence="2">Cell membrane</location>
        <topology evidence="3">Single-pass type I membrane protein</topology>
    </subcellularLocation>
</comment>
<comment type="PTM">
    <text evidence="1">Inducible phosphorylation of tyrosine residues in the cytoplasmic domain.</text>
</comment>
<comment type="similarity">
    <text evidence="4">Belongs to the ephrin family.</text>
</comment>
<name>EFNB2_DANRE</name>
<reference key="1">
    <citation type="journal article" date="1998" name="Genes Dev.">
        <title>Eph signaling is required for segmentation and differentiation of the somites.</title>
        <authorList>
            <person name="Durbin L."/>
            <person name="Brennan C."/>
            <person name="Shiomi K."/>
            <person name="Cooke J."/>
            <person name="Barrios A."/>
            <person name="Shanmugalingam S."/>
            <person name="Guthrie B."/>
            <person name="Lindberg R."/>
            <person name="Holder N."/>
        </authorList>
    </citation>
    <scope>NUCLEOTIDE SEQUENCE [MRNA]</scope>
</reference>
<reference key="2">
    <citation type="journal article" date="2001" name="Dev. Biol.">
        <title>Morphogenesis of prechordal plate and notochord requires intact eph/ephrin b signaling.</title>
        <authorList>
            <person name="Chan J."/>
            <person name="Mably J.D."/>
            <person name="Serluca F.C."/>
            <person name="Chen J.N."/>
            <person name="Goldstein N.B."/>
            <person name="Thomas M.C."/>
            <person name="Cleary J.A."/>
            <person name="Brennan C."/>
            <person name="Fishman M.C."/>
            <person name="Roberts T.M."/>
        </authorList>
    </citation>
    <scope>NUCLEOTIDE SEQUENCE [MRNA]</scope>
</reference>
<feature type="signal peptide" evidence="3">
    <location>
        <begin position="1"/>
        <end position="24"/>
    </location>
</feature>
<feature type="chain" id="PRO_0000008394" description="Ephrin-B2a">
    <location>
        <begin position="25"/>
        <end position="332"/>
    </location>
</feature>
<feature type="topological domain" description="Extracellular" evidence="3">
    <location>
        <begin position="25"/>
        <end position="225"/>
    </location>
</feature>
<feature type="transmembrane region" description="Helical" evidence="3">
    <location>
        <begin position="226"/>
        <end position="246"/>
    </location>
</feature>
<feature type="topological domain" description="Cytoplasmic" evidence="3">
    <location>
        <begin position="247"/>
        <end position="332"/>
    </location>
</feature>
<feature type="domain" description="Ephrin RBD" evidence="4">
    <location>
        <begin position="25"/>
        <end position="161"/>
    </location>
</feature>
<feature type="region of interest" description="Disordered" evidence="5">
    <location>
        <begin position="162"/>
        <end position="212"/>
    </location>
</feature>
<feature type="region of interest" description="Disordered" evidence="5">
    <location>
        <begin position="255"/>
        <end position="285"/>
    </location>
</feature>
<feature type="short sequence motif" description="PDZ-binding" evidence="3">
    <location>
        <begin position="330"/>
        <end position="332"/>
    </location>
</feature>
<feature type="compositionally biased region" description="Basic and acidic residues" evidence="5">
    <location>
        <begin position="181"/>
        <end position="210"/>
    </location>
</feature>
<feature type="compositionally biased region" description="Low complexity" evidence="5">
    <location>
        <begin position="260"/>
        <end position="270"/>
    </location>
</feature>
<feature type="glycosylation site" description="N-linked (GlcNAc...) asparagine" evidence="3">
    <location>
        <position position="20"/>
    </location>
</feature>
<feature type="glycosylation site" description="N-linked (GlcNAc...) asparagine" evidence="3">
    <location>
        <position position="33"/>
    </location>
</feature>
<feature type="glycosylation site" description="N-linked (GlcNAc...) asparagine" evidence="3">
    <location>
        <position position="136"/>
    </location>
</feature>
<feature type="glycosylation site" description="N-linked (GlcNAc...) asparagine" evidence="3">
    <location>
        <position position="211"/>
    </location>
</feature>
<feature type="disulfide bond" evidence="4">
    <location>
        <begin position="59"/>
        <end position="98"/>
    </location>
</feature>
<feature type="disulfide bond" evidence="4">
    <location>
        <begin position="86"/>
        <end position="150"/>
    </location>
</feature>
<keyword id="KW-0037">Angiogenesis</keyword>
<keyword id="KW-1003">Cell membrane</keyword>
<keyword id="KW-0217">Developmental protein</keyword>
<keyword id="KW-0221">Differentiation</keyword>
<keyword id="KW-1015">Disulfide bond</keyword>
<keyword id="KW-0325">Glycoprotein</keyword>
<keyword id="KW-0472">Membrane</keyword>
<keyword id="KW-0524">Neurogenesis</keyword>
<keyword id="KW-0597">Phosphoprotein</keyword>
<keyword id="KW-1185">Reference proteome</keyword>
<keyword id="KW-0732">Signal</keyword>
<keyword id="KW-0812">Transmembrane</keyword>
<keyword id="KW-1133">Transmembrane helix</keyword>
<dbReference type="EMBL" id="AJ004863">
    <property type="protein sequence ID" value="CAA06168.1"/>
    <property type="molecule type" value="mRNA"/>
</dbReference>
<dbReference type="EMBL" id="AF375225">
    <property type="protein sequence ID" value="AAK64275.1"/>
    <property type="molecule type" value="mRNA"/>
</dbReference>
<dbReference type="RefSeq" id="NP_571098.1">
    <property type="nucleotide sequence ID" value="NM_131023.1"/>
</dbReference>
<dbReference type="SMR" id="O73874"/>
<dbReference type="FunCoup" id="O73874">
    <property type="interactions" value="435"/>
</dbReference>
<dbReference type="IntAct" id="O73874">
    <property type="interactions" value="6"/>
</dbReference>
<dbReference type="STRING" id="7955.ENSDARP00000010432"/>
<dbReference type="GlyCosmos" id="O73874">
    <property type="glycosylation" value="4 sites, No reported glycans"/>
</dbReference>
<dbReference type="PaxDb" id="7955-ENSDARP00000010432"/>
<dbReference type="Ensembl" id="ENSDART00000026011">
    <property type="protein sequence ID" value="ENSDARP00000010432"/>
    <property type="gene ID" value="ENSDARG00000020164"/>
</dbReference>
<dbReference type="GeneID" id="30219"/>
<dbReference type="KEGG" id="dre:30219"/>
<dbReference type="AGR" id="ZFIN:ZDB-GENE-990415-67"/>
<dbReference type="CTD" id="30219"/>
<dbReference type="ZFIN" id="ZDB-GENE-990415-67">
    <property type="gene designation" value="efnb2a"/>
</dbReference>
<dbReference type="eggNOG" id="KOG3858">
    <property type="taxonomic scope" value="Eukaryota"/>
</dbReference>
<dbReference type="HOGENOM" id="CLU_072080_0_0_1"/>
<dbReference type="InParanoid" id="O73874"/>
<dbReference type="OMA" id="VPYPPKH"/>
<dbReference type="OrthoDB" id="6250301at2759"/>
<dbReference type="PhylomeDB" id="O73874"/>
<dbReference type="SignaLink" id="O73874"/>
<dbReference type="PRO" id="PR:O73874"/>
<dbReference type="Proteomes" id="UP000000437">
    <property type="component" value="Chromosome 9"/>
</dbReference>
<dbReference type="Bgee" id="ENSDARG00000020164">
    <property type="expression patterns" value="Expressed in immature eye and 71 other cell types or tissues"/>
</dbReference>
<dbReference type="ExpressionAtlas" id="O73874">
    <property type="expression patterns" value="baseline"/>
</dbReference>
<dbReference type="GO" id="GO:0098978">
    <property type="term" value="C:glutamatergic synapse"/>
    <property type="evidence" value="ECO:0000318"/>
    <property type="project" value="GO_Central"/>
</dbReference>
<dbReference type="GO" id="GO:0005886">
    <property type="term" value="C:plasma membrane"/>
    <property type="evidence" value="ECO:0000250"/>
    <property type="project" value="UniProtKB"/>
</dbReference>
<dbReference type="GO" id="GO:0042734">
    <property type="term" value="C:presynaptic membrane"/>
    <property type="evidence" value="ECO:0000318"/>
    <property type="project" value="GO_Central"/>
</dbReference>
<dbReference type="GO" id="GO:0046875">
    <property type="term" value="F:ephrin receptor binding"/>
    <property type="evidence" value="ECO:0000318"/>
    <property type="project" value="GO_Central"/>
</dbReference>
<dbReference type="GO" id="GO:0035475">
    <property type="term" value="P:angioblast cell migration involved in selective angioblast sprouting"/>
    <property type="evidence" value="ECO:0000315"/>
    <property type="project" value="ZFIN"/>
</dbReference>
<dbReference type="GO" id="GO:0009952">
    <property type="term" value="P:anterior/posterior pattern specification"/>
    <property type="evidence" value="ECO:0000316"/>
    <property type="project" value="ZFIN"/>
</dbReference>
<dbReference type="GO" id="GO:0007411">
    <property type="term" value="P:axon guidance"/>
    <property type="evidence" value="ECO:0000318"/>
    <property type="project" value="GO_Central"/>
</dbReference>
<dbReference type="GO" id="GO:0007412">
    <property type="term" value="P:axon target recognition"/>
    <property type="evidence" value="ECO:0000314"/>
    <property type="project" value="ZFIN"/>
</dbReference>
<dbReference type="GO" id="GO:0001568">
    <property type="term" value="P:blood vessel development"/>
    <property type="evidence" value="ECO:0000316"/>
    <property type="project" value="ZFIN"/>
</dbReference>
<dbReference type="GO" id="GO:0048514">
    <property type="term" value="P:blood vessel morphogenesis"/>
    <property type="evidence" value="ECO:0000318"/>
    <property type="project" value="GO_Central"/>
</dbReference>
<dbReference type="GO" id="GO:0007155">
    <property type="term" value="P:cell adhesion"/>
    <property type="evidence" value="ECO:0000250"/>
    <property type="project" value="UniProtKB"/>
</dbReference>
<dbReference type="GO" id="GO:0002042">
    <property type="term" value="P:cell migration involved in sprouting angiogenesis"/>
    <property type="evidence" value="ECO:0000250"/>
    <property type="project" value="UniProtKB"/>
</dbReference>
<dbReference type="GO" id="GO:0048013">
    <property type="term" value="P:ephrin receptor signaling pathway"/>
    <property type="evidence" value="ECO:0000250"/>
    <property type="project" value="UniProtKB"/>
</dbReference>
<dbReference type="GO" id="GO:0003404">
    <property type="term" value="P:optic vesicle morphogenesis"/>
    <property type="evidence" value="ECO:0000315"/>
    <property type="project" value="ZFIN"/>
</dbReference>
<dbReference type="GO" id="GO:0050920">
    <property type="term" value="P:regulation of chemotaxis"/>
    <property type="evidence" value="ECO:0000250"/>
    <property type="project" value="UniProtKB"/>
</dbReference>
<dbReference type="GO" id="GO:0021654">
    <property type="term" value="P:rhombomere boundary formation"/>
    <property type="evidence" value="ECO:0000316"/>
    <property type="project" value="ZFIN"/>
</dbReference>
<dbReference type="GO" id="GO:0001756">
    <property type="term" value="P:somitogenesis"/>
    <property type="evidence" value="ECO:0000315"/>
    <property type="project" value="ZFIN"/>
</dbReference>
<dbReference type="GO" id="GO:0008039">
    <property type="term" value="P:synaptic target recognition"/>
    <property type="evidence" value="ECO:0000270"/>
    <property type="project" value="ZFIN"/>
</dbReference>
<dbReference type="CDD" id="cd10426">
    <property type="entry name" value="Ephrin-B_Ectodomain"/>
    <property type="match status" value="1"/>
</dbReference>
<dbReference type="FunFam" id="2.60.40.420:FF:000020">
    <property type="entry name" value="Ephrin-B2"/>
    <property type="match status" value="1"/>
</dbReference>
<dbReference type="Gene3D" id="2.60.40.420">
    <property type="entry name" value="Cupredoxins - blue copper proteins"/>
    <property type="match status" value="1"/>
</dbReference>
<dbReference type="InterPro" id="IPR008972">
    <property type="entry name" value="Cupredoxin"/>
</dbReference>
<dbReference type="InterPro" id="IPR031328">
    <property type="entry name" value="Ephrin"/>
</dbReference>
<dbReference type="InterPro" id="IPR034255">
    <property type="entry name" value="Ephrin-B_Ecto"/>
</dbReference>
<dbReference type="InterPro" id="IPR019765">
    <property type="entry name" value="Ephrin_CS"/>
</dbReference>
<dbReference type="InterPro" id="IPR001799">
    <property type="entry name" value="Ephrin_RBD"/>
</dbReference>
<dbReference type="PANTHER" id="PTHR11304">
    <property type="entry name" value="EPHRIN"/>
    <property type="match status" value="1"/>
</dbReference>
<dbReference type="PANTHER" id="PTHR11304:SF18">
    <property type="entry name" value="EPHRIN-B2"/>
    <property type="match status" value="1"/>
</dbReference>
<dbReference type="Pfam" id="PF00812">
    <property type="entry name" value="Ephrin"/>
    <property type="match status" value="1"/>
</dbReference>
<dbReference type="PRINTS" id="PR01347">
    <property type="entry name" value="EPHRIN"/>
</dbReference>
<dbReference type="SUPFAM" id="SSF49503">
    <property type="entry name" value="Cupredoxins"/>
    <property type="match status" value="1"/>
</dbReference>
<dbReference type="PROSITE" id="PS01299">
    <property type="entry name" value="EPHRIN_RBD_1"/>
    <property type="match status" value="1"/>
</dbReference>
<dbReference type="PROSITE" id="PS51551">
    <property type="entry name" value="EPHRIN_RBD_2"/>
    <property type="match status" value="1"/>
</dbReference>
<organism>
    <name type="scientific">Danio rerio</name>
    <name type="common">Zebrafish</name>
    <name type="synonym">Brachydanio rerio</name>
    <dbReference type="NCBI Taxonomy" id="7955"/>
    <lineage>
        <taxon>Eukaryota</taxon>
        <taxon>Metazoa</taxon>
        <taxon>Chordata</taxon>
        <taxon>Craniata</taxon>
        <taxon>Vertebrata</taxon>
        <taxon>Euteleostomi</taxon>
        <taxon>Actinopterygii</taxon>
        <taxon>Neopterygii</taxon>
        <taxon>Teleostei</taxon>
        <taxon>Ostariophysi</taxon>
        <taxon>Cypriniformes</taxon>
        <taxon>Danionidae</taxon>
        <taxon>Danioninae</taxon>
        <taxon>Danio</taxon>
    </lineage>
</organism>